<accession>Q9FX24</accession>
<name>PPR71_ARATH</name>
<sequence length="581" mass="65453">MARVYMETMIQKCVSFSQIKQLQSHFLTAGHFQSSFLRSRLLERCAISPFGDLSFAVQIFRYIPKPLTNDWNAIIRGFAGSSHPSLAFSWYRSMLQQSSSSSAICRVDALTCSFTLKACARALCSSAMDQLHCQINRRGLSADSLLCTTLLDAYSKNGDLISAYKLFDEMPVRDVASWNALIAGLVSGNRASEAMELYKRMETEGIRRSEVTVVAALGACSHLGDVKEGENIFHGYSNDNVIVSNAAIDMYSKCGFVDKAYQVFEQFTGKKSVVTWNTMITGFAVHGEAHRALEIFDKLEDNGIKPDDVSYLAALTACRHAGLVEYGLSVFNNMACKGVERNMKHYGCVVDLLSRAGRLREAHDIICSMSMIPDPVLWQSLLGASEIYSDVEMAEIASREIKEMGVNNDGDFVLLSNVYAAQGRWKDVGRVRDDMESKQVKKIPGLSYIEAKGTIHEFYNSDKSHEQWREIYEKIDEIRFKIREDGYVAQTGLVLHDIGEEEKENALCYHSEKLAVAYGLMMMDGADEESPVRVINNLRICGDCHVVFKHISKIYKREIIVRDRVRFHRFKDGSCSCRDFW</sequence>
<protein>
    <recommendedName>
        <fullName>Pentatricopeptide repeat-containing protein At1g34160</fullName>
    </recommendedName>
</protein>
<comment type="similarity">
    <text evidence="1">Belongs to the PPR family. PCMP-H subfamily.</text>
</comment>
<comment type="sequence caution" evidence="1">
    <conflict type="erroneous gene model prediction">
        <sequence resource="EMBL-CDS" id="AAG12522"/>
    </conflict>
</comment>
<comment type="online information" name="Pentatricopeptide repeat proteins">
    <link uri="https://ppr.plantenergy.uwa.edu.au"/>
</comment>
<dbReference type="EMBL" id="AC015446">
    <property type="protein sequence ID" value="AAG12522.1"/>
    <property type="status" value="ALT_SEQ"/>
    <property type="molecule type" value="Genomic_DNA"/>
</dbReference>
<dbReference type="EMBL" id="CP002684">
    <property type="protein sequence ID" value="AEE31678.1"/>
    <property type="molecule type" value="Genomic_DNA"/>
</dbReference>
<dbReference type="PIR" id="G86465">
    <property type="entry name" value="G86465"/>
</dbReference>
<dbReference type="RefSeq" id="NP_174678.2">
    <property type="nucleotide sequence ID" value="NM_103139.3"/>
</dbReference>
<dbReference type="SMR" id="Q9FX24"/>
<dbReference type="FunCoup" id="Q9FX24">
    <property type="interactions" value="769"/>
</dbReference>
<dbReference type="PaxDb" id="3702-AT1G34160.1"/>
<dbReference type="ProteomicsDB" id="226164"/>
<dbReference type="EnsemblPlants" id="AT1G34160.1">
    <property type="protein sequence ID" value="AT1G34160.1"/>
    <property type="gene ID" value="AT1G34160"/>
</dbReference>
<dbReference type="GeneID" id="840315"/>
<dbReference type="Gramene" id="AT1G34160.1">
    <property type="protein sequence ID" value="AT1G34160.1"/>
    <property type="gene ID" value="AT1G34160"/>
</dbReference>
<dbReference type="KEGG" id="ath:AT1G34160"/>
<dbReference type="Araport" id="AT1G34160"/>
<dbReference type="TAIR" id="AT1G34160"/>
<dbReference type="eggNOG" id="KOG4197">
    <property type="taxonomic scope" value="Eukaryota"/>
</dbReference>
<dbReference type="HOGENOM" id="CLU_002706_37_2_1"/>
<dbReference type="InParanoid" id="Q9FX24"/>
<dbReference type="OMA" id="ASKARWM"/>
<dbReference type="OrthoDB" id="185373at2759"/>
<dbReference type="PhylomeDB" id="Q9FX24"/>
<dbReference type="PRO" id="PR:Q9FX24"/>
<dbReference type="Proteomes" id="UP000006548">
    <property type="component" value="Chromosome 1"/>
</dbReference>
<dbReference type="ExpressionAtlas" id="Q9FX24">
    <property type="expression patterns" value="baseline and differential"/>
</dbReference>
<dbReference type="GO" id="GO:0003723">
    <property type="term" value="F:RNA binding"/>
    <property type="evidence" value="ECO:0007669"/>
    <property type="project" value="InterPro"/>
</dbReference>
<dbReference type="GO" id="GO:0008270">
    <property type="term" value="F:zinc ion binding"/>
    <property type="evidence" value="ECO:0007669"/>
    <property type="project" value="InterPro"/>
</dbReference>
<dbReference type="GO" id="GO:0009451">
    <property type="term" value="P:RNA modification"/>
    <property type="evidence" value="ECO:0007669"/>
    <property type="project" value="InterPro"/>
</dbReference>
<dbReference type="FunFam" id="1.25.40.10:FF:000031">
    <property type="entry name" value="Pentatricopeptide repeat-containing protein mitochondrial"/>
    <property type="match status" value="1"/>
</dbReference>
<dbReference type="FunFam" id="1.25.40.10:FF:002536">
    <property type="entry name" value="Tetratricopeptide repeat (TPR)-like superfamily protein"/>
    <property type="match status" value="1"/>
</dbReference>
<dbReference type="Gene3D" id="1.25.40.10">
    <property type="entry name" value="Tetratricopeptide repeat domain"/>
    <property type="match status" value="2"/>
</dbReference>
<dbReference type="InterPro" id="IPR032867">
    <property type="entry name" value="DYW_dom"/>
</dbReference>
<dbReference type="InterPro" id="IPR046848">
    <property type="entry name" value="E_motif"/>
</dbReference>
<dbReference type="InterPro" id="IPR002885">
    <property type="entry name" value="Pentatricopeptide_rpt"/>
</dbReference>
<dbReference type="InterPro" id="IPR046960">
    <property type="entry name" value="PPR_At4g14850-like_plant"/>
</dbReference>
<dbReference type="InterPro" id="IPR011990">
    <property type="entry name" value="TPR-like_helical_dom_sf"/>
</dbReference>
<dbReference type="NCBIfam" id="TIGR00756">
    <property type="entry name" value="PPR"/>
    <property type="match status" value="3"/>
</dbReference>
<dbReference type="PANTHER" id="PTHR47926:SF408">
    <property type="entry name" value="DYW DOMAIN-CONTAINING PROTEIN"/>
    <property type="match status" value="1"/>
</dbReference>
<dbReference type="PANTHER" id="PTHR47926">
    <property type="entry name" value="PENTATRICOPEPTIDE REPEAT-CONTAINING PROTEIN"/>
    <property type="match status" value="1"/>
</dbReference>
<dbReference type="Pfam" id="PF14432">
    <property type="entry name" value="DYW_deaminase"/>
    <property type="match status" value="1"/>
</dbReference>
<dbReference type="Pfam" id="PF20431">
    <property type="entry name" value="E_motif"/>
    <property type="match status" value="1"/>
</dbReference>
<dbReference type="Pfam" id="PF01535">
    <property type="entry name" value="PPR"/>
    <property type="match status" value="5"/>
</dbReference>
<dbReference type="Pfam" id="PF13041">
    <property type="entry name" value="PPR_2"/>
    <property type="match status" value="1"/>
</dbReference>
<dbReference type="SUPFAM" id="SSF48452">
    <property type="entry name" value="TPR-like"/>
    <property type="match status" value="1"/>
</dbReference>
<dbReference type="PROSITE" id="PS51375">
    <property type="entry name" value="PPR"/>
    <property type="match status" value="9"/>
</dbReference>
<feature type="chain" id="PRO_0000342812" description="Pentatricopeptide repeat-containing protein At1g34160">
    <location>
        <begin position="1"/>
        <end position="581"/>
    </location>
</feature>
<feature type="repeat" description="PPR 1">
    <location>
        <begin position="67"/>
        <end position="101"/>
    </location>
</feature>
<feature type="repeat" description="PPR 2">
    <location>
        <begin position="108"/>
        <end position="142"/>
    </location>
</feature>
<feature type="repeat" description="PPR 3">
    <location>
        <begin position="143"/>
        <end position="173"/>
    </location>
</feature>
<feature type="repeat" description="PPR 4">
    <location>
        <begin position="174"/>
        <end position="208"/>
    </location>
</feature>
<feature type="repeat" description="PPR 5">
    <location>
        <begin position="209"/>
        <end position="239"/>
    </location>
</feature>
<feature type="repeat" description="PPR 6">
    <location>
        <begin position="240"/>
        <end position="270"/>
    </location>
</feature>
<feature type="repeat" description="PPR 7">
    <location>
        <begin position="272"/>
        <end position="306"/>
    </location>
</feature>
<feature type="repeat" description="PPR 8">
    <location>
        <begin position="307"/>
        <end position="341"/>
    </location>
</feature>
<feature type="repeat" description="PPR 9">
    <location>
        <begin position="342"/>
        <end position="372"/>
    </location>
</feature>
<feature type="region of interest" description="Type E motif">
    <location>
        <begin position="377"/>
        <end position="452"/>
    </location>
</feature>
<feature type="region of interest" description="Type E(+) motif">
    <location>
        <begin position="453"/>
        <end position="483"/>
    </location>
</feature>
<feature type="region of interest" description="Type DYW motif">
    <location>
        <begin position="484"/>
        <end position="581"/>
    </location>
</feature>
<proteinExistence type="evidence at transcript level"/>
<reference key="1">
    <citation type="journal article" date="2000" name="Nature">
        <title>Sequence and analysis of chromosome 1 of the plant Arabidopsis thaliana.</title>
        <authorList>
            <person name="Theologis A."/>
            <person name="Ecker J.R."/>
            <person name="Palm C.J."/>
            <person name="Federspiel N.A."/>
            <person name="Kaul S."/>
            <person name="White O."/>
            <person name="Alonso J."/>
            <person name="Altafi H."/>
            <person name="Araujo R."/>
            <person name="Bowman C.L."/>
            <person name="Brooks S.Y."/>
            <person name="Buehler E."/>
            <person name="Chan A."/>
            <person name="Chao Q."/>
            <person name="Chen H."/>
            <person name="Cheuk R.F."/>
            <person name="Chin C.W."/>
            <person name="Chung M.K."/>
            <person name="Conn L."/>
            <person name="Conway A.B."/>
            <person name="Conway A.R."/>
            <person name="Creasy T.H."/>
            <person name="Dewar K."/>
            <person name="Dunn P."/>
            <person name="Etgu P."/>
            <person name="Feldblyum T.V."/>
            <person name="Feng J.-D."/>
            <person name="Fong B."/>
            <person name="Fujii C.Y."/>
            <person name="Gill J.E."/>
            <person name="Goldsmith A.D."/>
            <person name="Haas B."/>
            <person name="Hansen N.F."/>
            <person name="Hughes B."/>
            <person name="Huizar L."/>
            <person name="Hunter J.L."/>
            <person name="Jenkins J."/>
            <person name="Johnson-Hopson C."/>
            <person name="Khan S."/>
            <person name="Khaykin E."/>
            <person name="Kim C.J."/>
            <person name="Koo H.L."/>
            <person name="Kremenetskaia I."/>
            <person name="Kurtz D.B."/>
            <person name="Kwan A."/>
            <person name="Lam B."/>
            <person name="Langin-Hooper S."/>
            <person name="Lee A."/>
            <person name="Lee J.M."/>
            <person name="Lenz C.A."/>
            <person name="Li J.H."/>
            <person name="Li Y.-P."/>
            <person name="Lin X."/>
            <person name="Liu S.X."/>
            <person name="Liu Z.A."/>
            <person name="Luros J.S."/>
            <person name="Maiti R."/>
            <person name="Marziali A."/>
            <person name="Militscher J."/>
            <person name="Miranda M."/>
            <person name="Nguyen M."/>
            <person name="Nierman W.C."/>
            <person name="Osborne B.I."/>
            <person name="Pai G."/>
            <person name="Peterson J."/>
            <person name="Pham P.K."/>
            <person name="Rizzo M."/>
            <person name="Rooney T."/>
            <person name="Rowley D."/>
            <person name="Sakano H."/>
            <person name="Salzberg S.L."/>
            <person name="Schwartz J.R."/>
            <person name="Shinn P."/>
            <person name="Southwick A.M."/>
            <person name="Sun H."/>
            <person name="Tallon L.J."/>
            <person name="Tambunga G."/>
            <person name="Toriumi M.J."/>
            <person name="Town C.D."/>
            <person name="Utterback T."/>
            <person name="Van Aken S."/>
            <person name="Vaysberg M."/>
            <person name="Vysotskaia V.S."/>
            <person name="Walker M."/>
            <person name="Wu D."/>
            <person name="Yu G."/>
            <person name="Fraser C.M."/>
            <person name="Venter J.C."/>
            <person name="Davis R.W."/>
        </authorList>
    </citation>
    <scope>NUCLEOTIDE SEQUENCE [LARGE SCALE GENOMIC DNA]</scope>
    <source>
        <strain>cv. Columbia</strain>
    </source>
</reference>
<reference key="2">
    <citation type="journal article" date="2017" name="Plant J.">
        <title>Araport11: a complete reannotation of the Arabidopsis thaliana reference genome.</title>
        <authorList>
            <person name="Cheng C.Y."/>
            <person name="Krishnakumar V."/>
            <person name="Chan A.P."/>
            <person name="Thibaud-Nissen F."/>
            <person name="Schobel S."/>
            <person name="Town C.D."/>
        </authorList>
    </citation>
    <scope>GENOME REANNOTATION</scope>
    <source>
        <strain>cv. Columbia</strain>
    </source>
</reference>
<reference key="3">
    <citation type="journal article" date="2004" name="Plant Cell">
        <title>Genome-wide analysis of Arabidopsis pentatricopeptide repeat proteins reveals their essential role in organelle biogenesis.</title>
        <authorList>
            <person name="Lurin C."/>
            <person name="Andres C."/>
            <person name="Aubourg S."/>
            <person name="Bellaoui M."/>
            <person name="Bitton F."/>
            <person name="Bruyere C."/>
            <person name="Caboche M."/>
            <person name="Debast C."/>
            <person name="Gualberto J."/>
            <person name="Hoffmann B."/>
            <person name="Lecharny A."/>
            <person name="Le Ret M."/>
            <person name="Martin-Magniette M.-L."/>
            <person name="Mireau H."/>
            <person name="Peeters N."/>
            <person name="Renou J.-P."/>
            <person name="Szurek B."/>
            <person name="Taconnat L."/>
            <person name="Small I."/>
        </authorList>
    </citation>
    <scope>GENE FAMILY</scope>
</reference>
<evidence type="ECO:0000305" key="1"/>
<organism>
    <name type="scientific">Arabidopsis thaliana</name>
    <name type="common">Mouse-ear cress</name>
    <dbReference type="NCBI Taxonomy" id="3702"/>
    <lineage>
        <taxon>Eukaryota</taxon>
        <taxon>Viridiplantae</taxon>
        <taxon>Streptophyta</taxon>
        <taxon>Embryophyta</taxon>
        <taxon>Tracheophyta</taxon>
        <taxon>Spermatophyta</taxon>
        <taxon>Magnoliopsida</taxon>
        <taxon>eudicotyledons</taxon>
        <taxon>Gunneridae</taxon>
        <taxon>Pentapetalae</taxon>
        <taxon>rosids</taxon>
        <taxon>malvids</taxon>
        <taxon>Brassicales</taxon>
        <taxon>Brassicaceae</taxon>
        <taxon>Camelineae</taxon>
        <taxon>Arabidopsis</taxon>
    </lineage>
</organism>
<keyword id="KW-1185">Reference proteome</keyword>
<keyword id="KW-0677">Repeat</keyword>
<gene>
    <name type="primary">PCMP-H68</name>
    <name type="ordered locus">At1g34160</name>
    <name type="ORF">F12G12.2</name>
</gene>